<dbReference type="EC" id="2.7.1.237" evidence="1"/>
<dbReference type="EMBL" id="CP000816">
    <property type="protein sequence ID" value="ABU81266.1"/>
    <property type="molecule type" value="Genomic_DNA"/>
</dbReference>
<dbReference type="SMR" id="A8A8L4"/>
<dbReference type="STRING" id="453591.Igni_0082"/>
<dbReference type="KEGG" id="iho:Igni_0082"/>
<dbReference type="eggNOG" id="arCOG04076">
    <property type="taxonomic scope" value="Archaea"/>
</dbReference>
<dbReference type="HOGENOM" id="CLU_120795_1_0_2"/>
<dbReference type="PhylomeDB" id="A8A8L4"/>
<dbReference type="UniPathway" id="UPA00241"/>
<dbReference type="Proteomes" id="UP000000262">
    <property type="component" value="Chromosome"/>
</dbReference>
<dbReference type="GO" id="GO:0005525">
    <property type="term" value="F:GTP binding"/>
    <property type="evidence" value="ECO:0007669"/>
    <property type="project" value="UniProtKB-UniRule"/>
</dbReference>
<dbReference type="GO" id="GO:0016301">
    <property type="term" value="F:kinase activity"/>
    <property type="evidence" value="ECO:0007669"/>
    <property type="project" value="UniProtKB-UniRule"/>
</dbReference>
<dbReference type="GO" id="GO:0015937">
    <property type="term" value="P:coenzyme A biosynthetic process"/>
    <property type="evidence" value="ECO:0007669"/>
    <property type="project" value="UniProtKB-UniRule"/>
</dbReference>
<dbReference type="HAMAP" id="MF_00590">
    <property type="entry name" value="Dephospho_CoA_kinase_GTP_dep"/>
    <property type="match status" value="1"/>
</dbReference>
<dbReference type="InterPro" id="IPR007164">
    <property type="entry name" value="GTP-dep_dephospho-CoA_kin"/>
</dbReference>
<dbReference type="PANTHER" id="PTHR40732:SF1">
    <property type="entry name" value="GTP-DEPENDENT DEPHOSPHO-COA KINASE"/>
    <property type="match status" value="1"/>
</dbReference>
<dbReference type="PANTHER" id="PTHR40732">
    <property type="entry name" value="UPF0218 PROTEIN TK1697"/>
    <property type="match status" value="1"/>
</dbReference>
<dbReference type="Pfam" id="PF04019">
    <property type="entry name" value="DUF359"/>
    <property type="match status" value="1"/>
</dbReference>
<sequence length="184" mass="20678">MRTLLASPRGALVKDDRLLPFLLRGKTLVTVGDVTTKRCLELGLVPRTAIFDGKTRRSQWVELRAPNGVLKAFNPPGQICLDAAKVVKKAILTSTWVKVEGEEDLLAIPALLSSENGWALLYGQPKAGVVLVEINKYTKLHFLEIIKMFDGDVEEFLREFDYDPNQPLLGELDERLYDLLFPEL</sequence>
<accession>A8A8L4</accession>
<comment type="function">
    <text evidence="1">Catalyzes the GTP-dependent phosphorylation of the 3'-hydroxyl group of dephosphocoenzyme A to form coenzyme A (CoA).</text>
</comment>
<comment type="catalytic activity">
    <reaction evidence="1">
        <text>3'-dephospho-CoA + GTP = GDP + CoA + H(+)</text>
        <dbReference type="Rhea" id="RHEA:61156"/>
        <dbReference type="ChEBI" id="CHEBI:15378"/>
        <dbReference type="ChEBI" id="CHEBI:37565"/>
        <dbReference type="ChEBI" id="CHEBI:57287"/>
        <dbReference type="ChEBI" id="CHEBI:57328"/>
        <dbReference type="ChEBI" id="CHEBI:58189"/>
        <dbReference type="EC" id="2.7.1.237"/>
    </reaction>
</comment>
<comment type="pathway">
    <text evidence="1">Cofactor biosynthesis; coenzyme A biosynthesis.</text>
</comment>
<comment type="similarity">
    <text evidence="1">Belongs to the GTP-dependent DPCK family.</text>
</comment>
<evidence type="ECO:0000255" key="1">
    <source>
        <dbReference type="HAMAP-Rule" id="MF_00590"/>
    </source>
</evidence>
<gene>
    <name type="ordered locus">Igni_0082</name>
</gene>
<protein>
    <recommendedName>
        <fullName evidence="1">GTP-dependent dephospho-CoA kinase</fullName>
        <ecNumber evidence="1">2.7.1.237</ecNumber>
    </recommendedName>
    <alternativeName>
        <fullName evidence="1">Dephospho-coenzyme A kinase</fullName>
        <shortName evidence="1">DPCK</shortName>
    </alternativeName>
</protein>
<feature type="chain" id="PRO_0000380051" description="GTP-dependent dephospho-CoA kinase">
    <location>
        <begin position="1"/>
        <end position="184"/>
    </location>
</feature>
<feature type="binding site" evidence="1">
    <location>
        <position position="33"/>
    </location>
    <ligand>
        <name>GTP</name>
        <dbReference type="ChEBI" id="CHEBI:37565"/>
    </ligand>
</feature>
<feature type="binding site" evidence="1">
    <location>
        <position position="34"/>
    </location>
    <ligand>
        <name>GTP</name>
        <dbReference type="ChEBI" id="CHEBI:37565"/>
    </ligand>
</feature>
<feature type="binding site" evidence="1">
    <location>
        <position position="52"/>
    </location>
    <ligand>
        <name>GTP</name>
        <dbReference type="ChEBI" id="CHEBI:37565"/>
    </ligand>
</feature>
<feature type="binding site" evidence="1">
    <location>
        <position position="54"/>
    </location>
    <ligand>
        <name>GTP</name>
        <dbReference type="ChEBI" id="CHEBI:37565"/>
    </ligand>
</feature>
<feature type="binding site" evidence="1">
    <location>
        <position position="103"/>
    </location>
    <ligand>
        <name>GTP</name>
        <dbReference type="ChEBI" id="CHEBI:37565"/>
    </ligand>
</feature>
<proteinExistence type="inferred from homology"/>
<organism>
    <name type="scientific">Ignicoccus hospitalis (strain KIN4/I / DSM 18386 / JCM 14125)</name>
    <dbReference type="NCBI Taxonomy" id="453591"/>
    <lineage>
        <taxon>Archaea</taxon>
        <taxon>Thermoproteota</taxon>
        <taxon>Thermoprotei</taxon>
        <taxon>Desulfurococcales</taxon>
        <taxon>Desulfurococcaceae</taxon>
        <taxon>Ignicoccus</taxon>
    </lineage>
</organism>
<keyword id="KW-0173">Coenzyme A biosynthesis</keyword>
<keyword id="KW-0342">GTP-binding</keyword>
<keyword id="KW-0418">Kinase</keyword>
<keyword id="KW-0547">Nucleotide-binding</keyword>
<keyword id="KW-1185">Reference proteome</keyword>
<keyword id="KW-0808">Transferase</keyword>
<reference key="1">
    <citation type="journal article" date="2008" name="Genome Biol.">
        <title>A genomic analysis of the archaeal system Ignicoccus hospitalis-Nanoarchaeum equitans.</title>
        <authorList>
            <person name="Podar M."/>
            <person name="Anderson I."/>
            <person name="Makarova K.S."/>
            <person name="Elkins J.G."/>
            <person name="Ivanova N."/>
            <person name="Wall M.A."/>
            <person name="Lykidis A."/>
            <person name="Mavromatis K."/>
            <person name="Sun H."/>
            <person name="Hudson M.E."/>
            <person name="Chen W."/>
            <person name="Deciu C."/>
            <person name="Hutchison D."/>
            <person name="Eads J.R."/>
            <person name="Anderson A."/>
            <person name="Fernandes F."/>
            <person name="Szeto E."/>
            <person name="Lapidus A."/>
            <person name="Kyrpides N.C."/>
            <person name="Saier M.H. Jr."/>
            <person name="Richardson P.M."/>
            <person name="Rachel R."/>
            <person name="Huber H."/>
            <person name="Eisen J.A."/>
            <person name="Koonin E.V."/>
            <person name="Keller M."/>
            <person name="Stetter K.O."/>
        </authorList>
    </citation>
    <scope>NUCLEOTIDE SEQUENCE [LARGE SCALE GENOMIC DNA]</scope>
    <source>
        <strain>KIN4/I / DSM 18386 / JCM 14125</strain>
    </source>
</reference>
<name>DPCKG_IGNH4</name>